<sequence>MARSNRCVPQNSSIVQIPIEEVFKTQLKSRWQQITMSSASSPPPPQVFVPEPLFSEPPPPPKAPVNVSLSPPPPPRSPSTSTPPRLGNRNPPPPASPSGQEPTTPTMTPGFSLSPPSPSRLSTGAVVGISIGGGVFVLTLIFFLCKKKRPRDDKALPAPIGLVLGIHQSTFTYGELARATNKFSEANLLGEGGFGFVYKGILNNGNEVAVKQLKVGSAQGEKEFQAEVNIISQIHHRNLVSLVGYCIAGAQRLLVYEFVPNNTLEFHLHGKGRPTMEWSLRLKIAVSSSKGLSYLHENCNPKIIHRDIKAANILIDFKFEAKVADFGLAKIALDTNTHVSTRVMGTFGYLAPEYAASGKLTEKSDVYSFGVVLLELITGRRPVDANNVYADDSLVDWARPLLVQALEESNFEGLADIKLNNEYDREEMARMVACAAACVRYTARRRPRMDQVVRVLEGNISPSDLNQGITPGHSNTVSVRLDARAVRVKPHGEMDSRWGRFKRTAQRYGGDSL</sequence>
<feature type="chain" id="PRO_0000400055" description="Proline-rich receptor-like protein kinase PERK3">
    <location>
        <begin position="1"/>
        <end position="513"/>
    </location>
</feature>
<feature type="topological domain" description="Extracellular" evidence="3">
    <location>
        <begin position="1"/>
        <end position="123"/>
    </location>
</feature>
<feature type="transmembrane region" description="Helical" evidence="3">
    <location>
        <begin position="124"/>
        <end position="144"/>
    </location>
</feature>
<feature type="topological domain" description="Cytoplasmic" evidence="3">
    <location>
        <begin position="145"/>
        <end position="513"/>
    </location>
</feature>
<feature type="domain" description="Protein kinase" evidence="4">
    <location>
        <begin position="183"/>
        <end position="334"/>
    </location>
</feature>
<feature type="region of interest" description="Disordered" evidence="6">
    <location>
        <begin position="27"/>
        <end position="119"/>
    </location>
</feature>
<feature type="compositionally biased region" description="Polar residues" evidence="6">
    <location>
        <begin position="27"/>
        <end position="36"/>
    </location>
</feature>
<feature type="compositionally biased region" description="Low complexity" evidence="6">
    <location>
        <begin position="78"/>
        <end position="89"/>
    </location>
</feature>
<feature type="compositionally biased region" description="Polar residues" evidence="6">
    <location>
        <begin position="99"/>
        <end position="111"/>
    </location>
</feature>
<feature type="active site" description="Proton acceptor" evidence="4 5">
    <location>
        <position position="307"/>
    </location>
</feature>
<feature type="binding site" evidence="4">
    <location>
        <begin position="189"/>
        <end position="197"/>
    </location>
    <ligand>
        <name>ATP</name>
        <dbReference type="ChEBI" id="CHEBI:30616"/>
    </ligand>
</feature>
<feature type="binding site" evidence="4">
    <location>
        <position position="211"/>
    </location>
    <ligand>
        <name>ATP</name>
        <dbReference type="ChEBI" id="CHEBI:30616"/>
    </ligand>
</feature>
<feature type="modified residue" description="Phosphothreonine" evidence="2">
    <location>
        <position position="172"/>
    </location>
</feature>
<feature type="modified residue" description="Phosphotyrosine" evidence="2">
    <location>
        <position position="256"/>
    </location>
</feature>
<feature type="modified residue" description="Phosphoserine" evidence="2">
    <location>
        <position position="340"/>
    </location>
</feature>
<feature type="modified residue" description="Phosphothreonine" evidence="2">
    <location>
        <position position="341"/>
    </location>
</feature>
<feature type="modified residue" description="Phosphothreonine" evidence="2">
    <location>
        <position position="346"/>
    </location>
</feature>
<feature type="modified residue" description="Phosphotyrosine" evidence="2">
    <location>
        <position position="354"/>
    </location>
</feature>
<feature type="glycosylation site" description="N-linked (GlcNAc...) asparagine" evidence="3">
    <location>
        <position position="11"/>
    </location>
</feature>
<feature type="glycosylation site" description="N-linked (GlcNAc...) asparagine" evidence="3">
    <location>
        <position position="66"/>
    </location>
</feature>
<feature type="splice variant" id="VSP_040357" description="In isoform 2." evidence="8">
    <original>ADFGLAKIALD</original>
    <variation>RFIFLSFLSFH</variation>
    <location>
        <begin position="324"/>
        <end position="334"/>
    </location>
</feature>
<feature type="splice variant" id="VSP_040358" description="In isoform 2." evidence="8">
    <location>
        <begin position="335"/>
        <end position="513"/>
    </location>
</feature>
<name>PERK3_ARATH</name>
<comment type="catalytic activity">
    <reaction>
        <text>L-seryl-[protein] + ATP = O-phospho-L-seryl-[protein] + ADP + H(+)</text>
        <dbReference type="Rhea" id="RHEA:17989"/>
        <dbReference type="Rhea" id="RHEA-COMP:9863"/>
        <dbReference type="Rhea" id="RHEA-COMP:11604"/>
        <dbReference type="ChEBI" id="CHEBI:15378"/>
        <dbReference type="ChEBI" id="CHEBI:29999"/>
        <dbReference type="ChEBI" id="CHEBI:30616"/>
        <dbReference type="ChEBI" id="CHEBI:83421"/>
        <dbReference type="ChEBI" id="CHEBI:456216"/>
        <dbReference type="EC" id="2.7.11.1"/>
    </reaction>
</comment>
<comment type="catalytic activity">
    <reaction>
        <text>L-threonyl-[protein] + ATP = O-phospho-L-threonyl-[protein] + ADP + H(+)</text>
        <dbReference type="Rhea" id="RHEA:46608"/>
        <dbReference type="Rhea" id="RHEA-COMP:11060"/>
        <dbReference type="Rhea" id="RHEA-COMP:11605"/>
        <dbReference type="ChEBI" id="CHEBI:15378"/>
        <dbReference type="ChEBI" id="CHEBI:30013"/>
        <dbReference type="ChEBI" id="CHEBI:30616"/>
        <dbReference type="ChEBI" id="CHEBI:61977"/>
        <dbReference type="ChEBI" id="CHEBI:456216"/>
        <dbReference type="EC" id="2.7.11.1"/>
    </reaction>
</comment>
<comment type="subcellular location">
    <subcellularLocation>
        <location evidence="1">Cell membrane</location>
        <topology evidence="1">Single-pass membrane protein</topology>
    </subcellularLocation>
</comment>
<comment type="alternative products">
    <event type="alternative splicing"/>
    <isoform>
        <id>Q1PEM5-1</id>
        <name>1</name>
        <sequence type="displayed"/>
    </isoform>
    <isoform>
        <id>Q1PEM5-2</id>
        <name>2</name>
        <sequence type="described" ref="VSP_040357 VSP_040358"/>
    </isoform>
</comment>
<comment type="tissue specificity">
    <text evidence="7">Expressed at low levels in inflorescence bolt, flower buds, siliques, roots, seedlings and leaves.</text>
</comment>
<comment type="miscellaneous">
    <molecule>Isoform 2</molecule>
    <text evidence="9">May be due to two introns retention.</text>
</comment>
<comment type="similarity">
    <text evidence="4">Belongs to the protein kinase superfamily. Ser/Thr protein kinase family.</text>
</comment>
<comment type="sequence caution" evidence="9">
    <conflict type="erroneous gene model prediction">
        <sequence resource="EMBL-CDS" id="BAB02005"/>
    </conflict>
</comment>
<dbReference type="EC" id="2.7.11.1"/>
<dbReference type="EMBL" id="AB020746">
    <property type="protein sequence ID" value="BAB02005.1"/>
    <property type="status" value="ALT_SEQ"/>
    <property type="molecule type" value="Genomic_DNA"/>
</dbReference>
<dbReference type="EMBL" id="CP002686">
    <property type="status" value="NOT_ANNOTATED_CDS"/>
    <property type="molecule type" value="Genomic_DNA"/>
</dbReference>
<dbReference type="EMBL" id="DQ446692">
    <property type="protein sequence ID" value="ABE65962.1"/>
    <property type="molecule type" value="mRNA"/>
</dbReference>
<dbReference type="SMR" id="Q1PEM5"/>
<dbReference type="FunCoup" id="Q1PEM5">
    <property type="interactions" value="56"/>
</dbReference>
<dbReference type="STRING" id="3702.Q1PEM5"/>
<dbReference type="GlyCosmos" id="Q1PEM5">
    <property type="glycosylation" value="2 sites, No reported glycans"/>
</dbReference>
<dbReference type="GlyGen" id="Q1PEM5">
    <property type="glycosylation" value="2 sites"/>
</dbReference>
<dbReference type="PaxDb" id="3702-AT3G24540.1"/>
<dbReference type="ProteomicsDB" id="236393">
    <molecule id="Q1PEM5-1"/>
</dbReference>
<dbReference type="Araport" id="AT3G24540"/>
<dbReference type="TAIR" id="AT3G24540"/>
<dbReference type="eggNOG" id="KOG1187">
    <property type="taxonomic scope" value="Eukaryota"/>
</dbReference>
<dbReference type="HOGENOM" id="CLU_000288_106_6_1"/>
<dbReference type="InParanoid" id="Q1PEM5"/>
<dbReference type="PhylomeDB" id="Q1PEM5"/>
<dbReference type="PRO" id="PR:Q1PEM5"/>
<dbReference type="Proteomes" id="UP000006548">
    <property type="component" value="Chromosome 3"/>
</dbReference>
<dbReference type="ExpressionAtlas" id="Q1PEM5">
    <property type="expression patterns" value="baseline and differential"/>
</dbReference>
<dbReference type="GO" id="GO:0005886">
    <property type="term" value="C:plasma membrane"/>
    <property type="evidence" value="ECO:0007669"/>
    <property type="project" value="UniProtKB-SubCell"/>
</dbReference>
<dbReference type="GO" id="GO:0005524">
    <property type="term" value="F:ATP binding"/>
    <property type="evidence" value="ECO:0007669"/>
    <property type="project" value="UniProtKB-KW"/>
</dbReference>
<dbReference type="GO" id="GO:0106310">
    <property type="term" value="F:protein serine kinase activity"/>
    <property type="evidence" value="ECO:0007669"/>
    <property type="project" value="RHEA"/>
</dbReference>
<dbReference type="GO" id="GO:0004674">
    <property type="term" value="F:protein serine/threonine kinase activity"/>
    <property type="evidence" value="ECO:0007669"/>
    <property type="project" value="UniProtKB-KW"/>
</dbReference>
<dbReference type="CDD" id="cd14066">
    <property type="entry name" value="STKc_IRAK"/>
    <property type="match status" value="1"/>
</dbReference>
<dbReference type="FunFam" id="1.10.510.10:FF:000239">
    <property type="entry name" value="Proline-rich receptor-like protein kinase PERK1"/>
    <property type="match status" value="1"/>
</dbReference>
<dbReference type="FunFam" id="3.30.200.20:FF:000212">
    <property type="entry name" value="Proline-rich receptor-like protein kinase PERK8"/>
    <property type="match status" value="1"/>
</dbReference>
<dbReference type="Gene3D" id="3.30.200.20">
    <property type="entry name" value="Phosphorylase Kinase, domain 1"/>
    <property type="match status" value="1"/>
</dbReference>
<dbReference type="Gene3D" id="1.10.510.10">
    <property type="entry name" value="Transferase(Phosphotransferase) domain 1"/>
    <property type="match status" value="1"/>
</dbReference>
<dbReference type="InterPro" id="IPR011009">
    <property type="entry name" value="Kinase-like_dom_sf"/>
</dbReference>
<dbReference type="InterPro" id="IPR047117">
    <property type="entry name" value="PERK1-13-like"/>
</dbReference>
<dbReference type="InterPro" id="IPR000719">
    <property type="entry name" value="Prot_kinase_dom"/>
</dbReference>
<dbReference type="InterPro" id="IPR017441">
    <property type="entry name" value="Protein_kinase_ATP_BS"/>
</dbReference>
<dbReference type="InterPro" id="IPR001245">
    <property type="entry name" value="Ser-Thr/Tyr_kinase_cat_dom"/>
</dbReference>
<dbReference type="InterPro" id="IPR008271">
    <property type="entry name" value="Ser/Thr_kinase_AS"/>
</dbReference>
<dbReference type="PANTHER" id="PTHR47982:SF35">
    <property type="entry name" value="PROLINE-RICH RECEPTOR-LIKE PROTEIN KINASE PERK1-RELATED"/>
    <property type="match status" value="1"/>
</dbReference>
<dbReference type="PANTHER" id="PTHR47982">
    <property type="entry name" value="PROLINE-RICH RECEPTOR-LIKE PROTEIN KINASE PERK4"/>
    <property type="match status" value="1"/>
</dbReference>
<dbReference type="Pfam" id="PF07714">
    <property type="entry name" value="PK_Tyr_Ser-Thr"/>
    <property type="match status" value="1"/>
</dbReference>
<dbReference type="SMART" id="SM00220">
    <property type="entry name" value="S_TKc"/>
    <property type="match status" value="1"/>
</dbReference>
<dbReference type="SUPFAM" id="SSF56112">
    <property type="entry name" value="Protein kinase-like (PK-like)"/>
    <property type="match status" value="1"/>
</dbReference>
<dbReference type="PROSITE" id="PS00107">
    <property type="entry name" value="PROTEIN_KINASE_ATP"/>
    <property type="match status" value="1"/>
</dbReference>
<dbReference type="PROSITE" id="PS50011">
    <property type="entry name" value="PROTEIN_KINASE_DOM"/>
    <property type="match status" value="1"/>
</dbReference>
<dbReference type="PROSITE" id="PS00108">
    <property type="entry name" value="PROTEIN_KINASE_ST"/>
    <property type="match status" value="1"/>
</dbReference>
<protein>
    <recommendedName>
        <fullName>Proline-rich receptor-like protein kinase PERK3</fullName>
        <ecNumber>2.7.11.1</ecNumber>
    </recommendedName>
    <alternativeName>
        <fullName>Proline-rich extensin-like receptor kinase 3</fullName>
        <shortName>AtPERK3</shortName>
    </alternativeName>
</protein>
<keyword id="KW-0025">Alternative splicing</keyword>
<keyword id="KW-0067">ATP-binding</keyword>
<keyword id="KW-1003">Cell membrane</keyword>
<keyword id="KW-0325">Glycoprotein</keyword>
<keyword id="KW-0418">Kinase</keyword>
<keyword id="KW-0472">Membrane</keyword>
<keyword id="KW-0547">Nucleotide-binding</keyword>
<keyword id="KW-0597">Phosphoprotein</keyword>
<keyword id="KW-1185">Reference proteome</keyword>
<keyword id="KW-0723">Serine/threonine-protein kinase</keyword>
<keyword id="KW-0808">Transferase</keyword>
<keyword id="KW-0812">Transmembrane</keyword>
<keyword id="KW-1133">Transmembrane helix</keyword>
<accession>Q1PEM5</accession>
<accession>F4J7P4</accession>
<accession>Q9LV50</accession>
<evidence type="ECO:0000250" key="1"/>
<evidence type="ECO:0000250" key="2">
    <source>
        <dbReference type="UniProtKB" id="O48814"/>
    </source>
</evidence>
<evidence type="ECO:0000255" key="3"/>
<evidence type="ECO:0000255" key="4">
    <source>
        <dbReference type="PROSITE-ProRule" id="PRU00159"/>
    </source>
</evidence>
<evidence type="ECO:0000255" key="5">
    <source>
        <dbReference type="PROSITE-ProRule" id="PRU10027"/>
    </source>
</evidence>
<evidence type="ECO:0000256" key="6">
    <source>
        <dbReference type="SAM" id="MobiDB-lite"/>
    </source>
</evidence>
<evidence type="ECO:0000269" key="7">
    <source>
    </source>
</evidence>
<evidence type="ECO:0000303" key="8">
    <source>
    </source>
</evidence>
<evidence type="ECO:0000305" key="9"/>
<reference key="1">
    <citation type="journal article" date="2000" name="DNA Res.">
        <title>Structural analysis of Arabidopsis thaliana chromosome 3. II. Sequence features of the 4,251,695 bp regions covered by 90 P1, TAC and BAC clones.</title>
        <authorList>
            <person name="Kaneko T."/>
            <person name="Katoh T."/>
            <person name="Sato S."/>
            <person name="Nakamura Y."/>
            <person name="Asamizu E."/>
            <person name="Tabata S."/>
        </authorList>
    </citation>
    <scope>NUCLEOTIDE SEQUENCE [LARGE SCALE GENOMIC DNA]</scope>
    <source>
        <strain>cv. Columbia</strain>
    </source>
</reference>
<reference key="2">
    <citation type="journal article" date="2017" name="Plant J.">
        <title>Araport11: a complete reannotation of the Arabidopsis thaliana reference genome.</title>
        <authorList>
            <person name="Cheng C.Y."/>
            <person name="Krishnakumar V."/>
            <person name="Chan A.P."/>
            <person name="Thibaud-Nissen F."/>
            <person name="Schobel S."/>
            <person name="Town C.D."/>
        </authorList>
    </citation>
    <scope>GENOME REANNOTATION</scope>
    <source>
        <strain>cv. Columbia</strain>
    </source>
</reference>
<reference key="3">
    <citation type="journal article" date="2006" name="Plant Biotechnol. J.">
        <title>Simultaneous high-throughput recombinational cloning of open reading frames in closed and open configurations.</title>
        <authorList>
            <person name="Underwood B.A."/>
            <person name="Vanderhaeghen R."/>
            <person name="Whitford R."/>
            <person name="Town C.D."/>
            <person name="Hilson P."/>
        </authorList>
    </citation>
    <scope>NUCLEOTIDE SEQUENCE [LARGE SCALE MRNA] (ISOFORM 2)</scope>
    <source>
        <strain>cv. Columbia</strain>
    </source>
</reference>
<reference key="4">
    <citation type="journal article" date="2002" name="Plant Mol. Biol.">
        <title>The proline-rich, extensin-like receptor kinase-1 (PERK1) gene is rapidly induced by wounding.</title>
        <authorList>
            <person name="Silva N.F."/>
            <person name="Goring D.R."/>
        </authorList>
    </citation>
    <scope>GENE FAMILY</scope>
</reference>
<reference key="5">
    <citation type="journal article" date="2004" name="Plant Cell Physiol.">
        <title>A comprehensive expression analysis of the Arabidopsis proline-rich extensin-like receptor kinase gene family using bioinformatic and experimental approaches.</title>
        <authorList>
            <person name="Nakhamchik A."/>
            <person name="Zhao Z."/>
            <person name="Provart N.J."/>
            <person name="Shiu S.-H."/>
            <person name="Keatley S.K."/>
            <person name="Cameron R.K."/>
            <person name="Goring D.R."/>
        </authorList>
    </citation>
    <scope>TISSUE SPECIFICITY</scope>
    <scope>GENE FAMILY</scope>
    <scope>NOMENCLATURE</scope>
</reference>
<proteinExistence type="evidence at transcript level"/>
<gene>
    <name type="primary">PERK3</name>
    <name type="ordered locus">At3g24540</name>
    <name type="ORF">MOB24.4</name>
</gene>
<organism>
    <name type="scientific">Arabidopsis thaliana</name>
    <name type="common">Mouse-ear cress</name>
    <dbReference type="NCBI Taxonomy" id="3702"/>
    <lineage>
        <taxon>Eukaryota</taxon>
        <taxon>Viridiplantae</taxon>
        <taxon>Streptophyta</taxon>
        <taxon>Embryophyta</taxon>
        <taxon>Tracheophyta</taxon>
        <taxon>Spermatophyta</taxon>
        <taxon>Magnoliopsida</taxon>
        <taxon>eudicotyledons</taxon>
        <taxon>Gunneridae</taxon>
        <taxon>Pentapetalae</taxon>
        <taxon>rosids</taxon>
        <taxon>malvids</taxon>
        <taxon>Brassicales</taxon>
        <taxon>Brassicaceae</taxon>
        <taxon>Camelineae</taxon>
        <taxon>Arabidopsis</taxon>
    </lineage>
</organism>